<dbReference type="EMBL" id="CP000655">
    <property type="protein sequence ID" value="ABP33296.1"/>
    <property type="molecule type" value="Genomic_DNA"/>
</dbReference>
<dbReference type="RefSeq" id="WP_011901921.1">
    <property type="nucleotide sequence ID" value="NC_009379.1"/>
</dbReference>
<dbReference type="SMR" id="A4SUY2"/>
<dbReference type="GeneID" id="31480420"/>
<dbReference type="KEGG" id="pnu:Pnuc_0074"/>
<dbReference type="eggNOG" id="COG0361">
    <property type="taxonomic scope" value="Bacteria"/>
</dbReference>
<dbReference type="HOGENOM" id="CLU_151267_1_0_4"/>
<dbReference type="Proteomes" id="UP000000231">
    <property type="component" value="Chromosome"/>
</dbReference>
<dbReference type="GO" id="GO:0005829">
    <property type="term" value="C:cytosol"/>
    <property type="evidence" value="ECO:0007669"/>
    <property type="project" value="TreeGrafter"/>
</dbReference>
<dbReference type="GO" id="GO:0043022">
    <property type="term" value="F:ribosome binding"/>
    <property type="evidence" value="ECO:0007669"/>
    <property type="project" value="UniProtKB-UniRule"/>
</dbReference>
<dbReference type="GO" id="GO:0019843">
    <property type="term" value="F:rRNA binding"/>
    <property type="evidence" value="ECO:0007669"/>
    <property type="project" value="UniProtKB-UniRule"/>
</dbReference>
<dbReference type="GO" id="GO:0003743">
    <property type="term" value="F:translation initiation factor activity"/>
    <property type="evidence" value="ECO:0007669"/>
    <property type="project" value="UniProtKB-UniRule"/>
</dbReference>
<dbReference type="CDD" id="cd04451">
    <property type="entry name" value="S1_IF1"/>
    <property type="match status" value="1"/>
</dbReference>
<dbReference type="FunFam" id="2.40.50.140:FF:000002">
    <property type="entry name" value="Translation initiation factor IF-1"/>
    <property type="match status" value="1"/>
</dbReference>
<dbReference type="Gene3D" id="2.40.50.140">
    <property type="entry name" value="Nucleic acid-binding proteins"/>
    <property type="match status" value="1"/>
</dbReference>
<dbReference type="HAMAP" id="MF_00075">
    <property type="entry name" value="IF_1"/>
    <property type="match status" value="1"/>
</dbReference>
<dbReference type="InterPro" id="IPR012340">
    <property type="entry name" value="NA-bd_OB-fold"/>
</dbReference>
<dbReference type="InterPro" id="IPR006196">
    <property type="entry name" value="RNA-binding_domain_S1_IF1"/>
</dbReference>
<dbReference type="InterPro" id="IPR004368">
    <property type="entry name" value="TIF_IF1"/>
</dbReference>
<dbReference type="NCBIfam" id="TIGR00008">
    <property type="entry name" value="infA"/>
    <property type="match status" value="1"/>
</dbReference>
<dbReference type="PANTHER" id="PTHR33370">
    <property type="entry name" value="TRANSLATION INITIATION FACTOR IF-1, CHLOROPLASTIC"/>
    <property type="match status" value="1"/>
</dbReference>
<dbReference type="PANTHER" id="PTHR33370:SF1">
    <property type="entry name" value="TRANSLATION INITIATION FACTOR IF-1, CHLOROPLASTIC"/>
    <property type="match status" value="1"/>
</dbReference>
<dbReference type="Pfam" id="PF01176">
    <property type="entry name" value="eIF-1a"/>
    <property type="match status" value="1"/>
</dbReference>
<dbReference type="SUPFAM" id="SSF50249">
    <property type="entry name" value="Nucleic acid-binding proteins"/>
    <property type="match status" value="1"/>
</dbReference>
<dbReference type="PROSITE" id="PS50832">
    <property type="entry name" value="S1_IF1_TYPE"/>
    <property type="match status" value="1"/>
</dbReference>
<sequence>MSKDDVIQMAGEVVENLPNAMFRVKLENGHVFLGHISGKMRMHYIRILPGDKVTVEMTPYDLTRARIIFRAK</sequence>
<organism>
    <name type="scientific">Polynucleobacter asymbioticus (strain DSM 18221 / CIP 109841 / QLW-P1DMWA-1)</name>
    <name type="common">Polynucleobacter necessarius subsp. asymbioticus</name>
    <dbReference type="NCBI Taxonomy" id="312153"/>
    <lineage>
        <taxon>Bacteria</taxon>
        <taxon>Pseudomonadati</taxon>
        <taxon>Pseudomonadota</taxon>
        <taxon>Betaproteobacteria</taxon>
        <taxon>Burkholderiales</taxon>
        <taxon>Burkholderiaceae</taxon>
        <taxon>Polynucleobacter</taxon>
    </lineage>
</organism>
<keyword id="KW-0963">Cytoplasm</keyword>
<keyword id="KW-0396">Initiation factor</keyword>
<keyword id="KW-0648">Protein biosynthesis</keyword>
<keyword id="KW-1185">Reference proteome</keyword>
<keyword id="KW-0694">RNA-binding</keyword>
<keyword id="KW-0699">rRNA-binding</keyword>
<accession>A4SUY2</accession>
<comment type="function">
    <text evidence="1">One of the essential components for the initiation of protein synthesis. Stabilizes the binding of IF-2 and IF-3 on the 30S subunit to which N-formylmethionyl-tRNA(fMet) subsequently binds. Helps modulate mRNA selection, yielding the 30S pre-initiation complex (PIC). Upon addition of the 50S ribosomal subunit IF-1, IF-2 and IF-3 are released leaving the mature 70S translation initiation complex.</text>
</comment>
<comment type="subunit">
    <text evidence="1">Component of the 30S ribosomal translation pre-initiation complex which assembles on the 30S ribosome in the order IF-2 and IF-3, IF-1 and N-formylmethionyl-tRNA(fMet); mRNA recruitment can occur at any time during PIC assembly.</text>
</comment>
<comment type="subcellular location">
    <subcellularLocation>
        <location evidence="1">Cytoplasm</location>
    </subcellularLocation>
</comment>
<comment type="similarity">
    <text evidence="1">Belongs to the IF-1 family.</text>
</comment>
<feature type="chain" id="PRO_0000338884" description="Translation initiation factor IF-1 1">
    <location>
        <begin position="1"/>
        <end position="72"/>
    </location>
</feature>
<feature type="domain" description="S1-like" evidence="1">
    <location>
        <begin position="1"/>
        <end position="72"/>
    </location>
</feature>
<protein>
    <recommendedName>
        <fullName evidence="1">Translation initiation factor IF-1 1</fullName>
    </recommendedName>
</protein>
<evidence type="ECO:0000255" key="1">
    <source>
        <dbReference type="HAMAP-Rule" id="MF_00075"/>
    </source>
</evidence>
<name>IF11_POLAQ</name>
<gene>
    <name evidence="1" type="primary">infA1</name>
    <name type="ordered locus">Pnuc_0074</name>
</gene>
<reference key="1">
    <citation type="journal article" date="2012" name="Stand. Genomic Sci.">
        <title>Complete genome sequence of Polynucleobacter necessarius subsp. asymbioticus type strain (QLW-P1DMWA-1(T)).</title>
        <authorList>
            <person name="Meincke L."/>
            <person name="Copeland A."/>
            <person name="Lapidus A."/>
            <person name="Lucas S."/>
            <person name="Berry K.W."/>
            <person name="Del Rio T.G."/>
            <person name="Hammon N."/>
            <person name="Dalin E."/>
            <person name="Tice H."/>
            <person name="Pitluck S."/>
            <person name="Richardson P."/>
            <person name="Bruce D."/>
            <person name="Goodwin L."/>
            <person name="Han C."/>
            <person name="Tapia R."/>
            <person name="Detter J.C."/>
            <person name="Schmutz J."/>
            <person name="Brettin T."/>
            <person name="Larimer F."/>
            <person name="Land M."/>
            <person name="Hauser L."/>
            <person name="Kyrpides N.C."/>
            <person name="Ivanova N."/>
            <person name="Goker M."/>
            <person name="Woyke T."/>
            <person name="Wu Q.L."/>
            <person name="Pockl M."/>
            <person name="Hahn M.W."/>
            <person name="Klenk H.P."/>
        </authorList>
    </citation>
    <scope>NUCLEOTIDE SEQUENCE [LARGE SCALE GENOMIC DNA]</scope>
    <source>
        <strain>DSM 18221 / CIP 109841 / QLW-P1DMWA-1</strain>
    </source>
</reference>
<proteinExistence type="inferred from homology"/>